<proteinExistence type="evidence at protein level"/>
<protein>
    <recommendedName>
        <fullName>Calcium and integrin-binding family member 3</fullName>
    </recommendedName>
    <alternativeName>
        <fullName>Kinase-interacting protein 3</fullName>
        <shortName>KIP 3</shortName>
    </alternativeName>
</protein>
<accession>Q96Q77</accession>
<accession>E7EUX1</accession>
<accession>Q2M1W0</accession>
<accession>Q6ISP1</accession>
<dbReference type="EMBL" id="AB050868">
    <property type="protein sequence ID" value="BAB71789.1"/>
    <property type="molecule type" value="mRNA"/>
</dbReference>
<dbReference type="EMBL" id="AC020911">
    <property type="status" value="NOT_ANNOTATED_CDS"/>
    <property type="molecule type" value="Genomic_DNA"/>
</dbReference>
<dbReference type="EMBL" id="CH471106">
    <property type="protein sequence ID" value="EAW84535.1"/>
    <property type="molecule type" value="Genomic_DNA"/>
</dbReference>
<dbReference type="EMBL" id="BC069428">
    <property type="protein sequence ID" value="AAH69428.1"/>
    <property type="molecule type" value="mRNA"/>
</dbReference>
<dbReference type="EMBL" id="BC112200">
    <property type="protein sequence ID" value="AAI12201.1"/>
    <property type="molecule type" value="mRNA"/>
</dbReference>
<dbReference type="EMBL" id="BC113591">
    <property type="protein sequence ID" value="AAI13592.1"/>
    <property type="molecule type" value="mRNA"/>
</dbReference>
<dbReference type="CCDS" id="CCDS12340.1">
    <molecule id="Q96Q77-1"/>
</dbReference>
<dbReference type="CCDS" id="CCDS74305.1">
    <molecule id="Q96Q77-2"/>
</dbReference>
<dbReference type="RefSeq" id="NP_001287851.1">
    <molecule id="Q96Q77-2"/>
    <property type="nucleotide sequence ID" value="NM_001300922.2"/>
</dbReference>
<dbReference type="RefSeq" id="NP_473454.1">
    <molecule id="Q96Q77-1"/>
    <property type="nucleotide sequence ID" value="NM_054113.4"/>
</dbReference>
<dbReference type="PDB" id="6WU5">
    <property type="method" value="X-ray"/>
    <property type="resolution" value="1.88 A"/>
    <property type="chains" value="A/B=1-187"/>
</dbReference>
<dbReference type="PDB" id="6WU7">
    <property type="method" value="X-ray"/>
    <property type="resolution" value="1.84 A"/>
    <property type="chains" value="A/B=1-187"/>
</dbReference>
<dbReference type="PDB" id="6WUD">
    <property type="method" value="X-ray"/>
    <property type="resolution" value="1.84 A"/>
    <property type="chains" value="A=1-187"/>
</dbReference>
<dbReference type="PDBsum" id="6WU5"/>
<dbReference type="PDBsum" id="6WU7"/>
<dbReference type="PDBsum" id="6WUD"/>
<dbReference type="SMR" id="Q96Q77"/>
<dbReference type="BioGRID" id="125586">
    <property type="interactions" value="70"/>
</dbReference>
<dbReference type="FunCoup" id="Q96Q77">
    <property type="interactions" value="26"/>
</dbReference>
<dbReference type="IntAct" id="Q96Q77">
    <property type="interactions" value="66"/>
</dbReference>
<dbReference type="STRING" id="9606.ENSP00000269878"/>
<dbReference type="iPTMnet" id="Q96Q77"/>
<dbReference type="PhosphoSitePlus" id="Q96Q77"/>
<dbReference type="BioMuta" id="CIB3"/>
<dbReference type="MassIVE" id="Q96Q77"/>
<dbReference type="PaxDb" id="9606-ENSP00000269878"/>
<dbReference type="Antibodypedia" id="43661">
    <property type="antibodies" value="131 antibodies from 23 providers"/>
</dbReference>
<dbReference type="DNASU" id="117286"/>
<dbReference type="Ensembl" id="ENST00000269878.8">
    <molecule id="Q96Q77-1"/>
    <property type="protein sequence ID" value="ENSP00000269878.3"/>
    <property type="gene ID" value="ENSG00000141977.9"/>
</dbReference>
<dbReference type="Ensembl" id="ENST00000379859.7">
    <molecule id="Q96Q77-2"/>
    <property type="protein sequence ID" value="ENSP00000369188.3"/>
    <property type="gene ID" value="ENSG00000141977.9"/>
</dbReference>
<dbReference type="GeneID" id="117286"/>
<dbReference type="KEGG" id="hsa:117286"/>
<dbReference type="MANE-Select" id="ENST00000269878.8">
    <property type="protein sequence ID" value="ENSP00000269878.3"/>
    <property type="RefSeq nucleotide sequence ID" value="NM_054113.4"/>
    <property type="RefSeq protein sequence ID" value="NP_473454.1"/>
</dbReference>
<dbReference type="UCSC" id="uc002nds.4">
    <molecule id="Q96Q77-1"/>
    <property type="organism name" value="human"/>
</dbReference>
<dbReference type="AGR" id="HGNC:24580"/>
<dbReference type="CTD" id="117286"/>
<dbReference type="DisGeNET" id="117286"/>
<dbReference type="GeneCards" id="CIB3"/>
<dbReference type="HGNC" id="HGNC:24580">
    <property type="gene designation" value="CIB3"/>
</dbReference>
<dbReference type="HPA" id="ENSG00000141977">
    <property type="expression patterns" value="Tissue enhanced (bone)"/>
</dbReference>
<dbReference type="MIM" id="610645">
    <property type="type" value="gene"/>
</dbReference>
<dbReference type="neXtProt" id="NX_Q96Q77"/>
<dbReference type="OpenTargets" id="ENSG00000141977"/>
<dbReference type="PharmGKB" id="PA134867741"/>
<dbReference type="VEuPathDB" id="HostDB:ENSG00000141977"/>
<dbReference type="eggNOG" id="KOG0038">
    <property type="taxonomic scope" value="Eukaryota"/>
</dbReference>
<dbReference type="GeneTree" id="ENSGT00940000160466"/>
<dbReference type="HOGENOM" id="CLU_061288_6_0_1"/>
<dbReference type="InParanoid" id="Q96Q77"/>
<dbReference type="OMA" id="RDIKAWY"/>
<dbReference type="OrthoDB" id="114727at2759"/>
<dbReference type="PAN-GO" id="Q96Q77">
    <property type="GO annotations" value="3 GO annotations based on evolutionary models"/>
</dbReference>
<dbReference type="PhylomeDB" id="Q96Q77"/>
<dbReference type="TreeFam" id="TF313865"/>
<dbReference type="PathwayCommons" id="Q96Q77"/>
<dbReference type="SignaLink" id="Q96Q77"/>
<dbReference type="BioGRID-ORCS" id="117286">
    <property type="hits" value="13 hits in 1146 CRISPR screens"/>
</dbReference>
<dbReference type="ChiTaRS" id="CIB3">
    <property type="organism name" value="human"/>
</dbReference>
<dbReference type="GenomeRNAi" id="117286"/>
<dbReference type="Pharos" id="Q96Q77">
    <property type="development level" value="Tbio"/>
</dbReference>
<dbReference type="PRO" id="PR:Q96Q77"/>
<dbReference type="Proteomes" id="UP000005640">
    <property type="component" value="Chromosome 19"/>
</dbReference>
<dbReference type="RNAct" id="Q96Q77">
    <property type="molecule type" value="protein"/>
</dbReference>
<dbReference type="Bgee" id="ENSG00000141977">
    <property type="expression patterns" value="Expressed in male germ line stem cell (sensu Vertebrata) in testis and 77 other cell types or tissues"/>
</dbReference>
<dbReference type="ExpressionAtlas" id="Q96Q77">
    <property type="expression patterns" value="baseline and differential"/>
</dbReference>
<dbReference type="GO" id="GO:0005509">
    <property type="term" value="F:calcium ion binding"/>
    <property type="evidence" value="ECO:0000314"/>
    <property type="project" value="UniProtKB"/>
</dbReference>
<dbReference type="GO" id="GO:0000287">
    <property type="term" value="F:magnesium ion binding"/>
    <property type="evidence" value="ECO:0000314"/>
    <property type="project" value="UniProtKB"/>
</dbReference>
<dbReference type="GO" id="GO:0055074">
    <property type="term" value="P:calcium ion homeostasis"/>
    <property type="evidence" value="ECO:0000318"/>
    <property type="project" value="GO_Central"/>
</dbReference>
<dbReference type="CDD" id="cd00051">
    <property type="entry name" value="EFh"/>
    <property type="match status" value="1"/>
</dbReference>
<dbReference type="FunFam" id="1.10.238.10:FF:000079">
    <property type="entry name" value="Calcium and integrin-binding family member 2"/>
    <property type="match status" value="1"/>
</dbReference>
<dbReference type="Gene3D" id="1.10.238.10">
    <property type="entry name" value="EF-hand"/>
    <property type="match status" value="2"/>
</dbReference>
<dbReference type="InterPro" id="IPR051433">
    <property type="entry name" value="CIBP"/>
</dbReference>
<dbReference type="InterPro" id="IPR011992">
    <property type="entry name" value="EF-hand-dom_pair"/>
</dbReference>
<dbReference type="InterPro" id="IPR018247">
    <property type="entry name" value="EF_Hand_1_Ca_BS"/>
</dbReference>
<dbReference type="InterPro" id="IPR002048">
    <property type="entry name" value="EF_hand_dom"/>
</dbReference>
<dbReference type="PANTHER" id="PTHR45791">
    <property type="entry name" value="CALCIUM AND INTEGRIN BINDING FAMILY MEMBER 2"/>
    <property type="match status" value="1"/>
</dbReference>
<dbReference type="PANTHER" id="PTHR45791:SF7">
    <property type="entry name" value="CALCIUM AND INTEGRIN-BINDING FAMILY MEMBER 3"/>
    <property type="match status" value="1"/>
</dbReference>
<dbReference type="Pfam" id="PF13499">
    <property type="entry name" value="EF-hand_7"/>
    <property type="match status" value="1"/>
</dbReference>
<dbReference type="SUPFAM" id="SSF47473">
    <property type="entry name" value="EF-hand"/>
    <property type="match status" value="1"/>
</dbReference>
<dbReference type="PROSITE" id="PS00018">
    <property type="entry name" value="EF_HAND_1"/>
    <property type="match status" value="2"/>
</dbReference>
<dbReference type="PROSITE" id="PS50222">
    <property type="entry name" value="EF_HAND_2"/>
    <property type="match status" value="3"/>
</dbReference>
<feature type="chain" id="PRO_0000073536" description="Calcium and integrin-binding family member 3">
    <location>
        <begin position="1"/>
        <end position="187"/>
    </location>
</feature>
<feature type="domain" description="EF-hand 1" evidence="2">
    <location>
        <begin position="66"/>
        <end position="101"/>
    </location>
</feature>
<feature type="domain" description="EF-hand 2" evidence="2">
    <location>
        <begin position="103"/>
        <end position="138"/>
    </location>
</feature>
<feature type="domain" description="EF-hand 3" evidence="2">
    <location>
        <begin position="144"/>
        <end position="179"/>
    </location>
</feature>
<feature type="binding site" evidence="2">
    <location>
        <position position="116"/>
    </location>
    <ligand>
        <name>Ca(2+)</name>
        <dbReference type="ChEBI" id="CHEBI:29108"/>
        <label>1</label>
    </ligand>
</feature>
<feature type="binding site" evidence="2">
    <location>
        <position position="118"/>
    </location>
    <ligand>
        <name>Ca(2+)</name>
        <dbReference type="ChEBI" id="CHEBI:29108"/>
        <label>1</label>
    </ligand>
</feature>
<feature type="binding site" evidence="2">
    <location>
        <position position="120"/>
    </location>
    <ligand>
        <name>Ca(2+)</name>
        <dbReference type="ChEBI" id="CHEBI:29108"/>
        <label>1</label>
    </ligand>
</feature>
<feature type="binding site" evidence="2">
    <location>
        <position position="122"/>
    </location>
    <ligand>
        <name>Ca(2+)</name>
        <dbReference type="ChEBI" id="CHEBI:29108"/>
        <label>1</label>
    </ligand>
</feature>
<feature type="binding site" evidence="2">
    <location>
        <position position="127"/>
    </location>
    <ligand>
        <name>Ca(2+)</name>
        <dbReference type="ChEBI" id="CHEBI:29108"/>
        <label>1</label>
    </ligand>
</feature>
<feature type="binding site" evidence="2">
    <location>
        <position position="157"/>
    </location>
    <ligand>
        <name>Ca(2+)</name>
        <dbReference type="ChEBI" id="CHEBI:29108"/>
        <label>2</label>
    </ligand>
</feature>
<feature type="binding site" evidence="2">
    <location>
        <position position="159"/>
    </location>
    <ligand>
        <name>Ca(2+)</name>
        <dbReference type="ChEBI" id="CHEBI:29108"/>
        <label>2</label>
    </ligand>
</feature>
<feature type="binding site" evidence="2">
    <location>
        <position position="161"/>
    </location>
    <ligand>
        <name>Ca(2+)</name>
        <dbReference type="ChEBI" id="CHEBI:29108"/>
        <label>2</label>
    </ligand>
</feature>
<feature type="binding site" evidence="2">
    <location>
        <position position="163"/>
    </location>
    <ligand>
        <name>Ca(2+)</name>
        <dbReference type="ChEBI" id="CHEBI:29108"/>
        <label>2</label>
    </ligand>
</feature>
<feature type="binding site" evidence="2">
    <location>
        <position position="168"/>
    </location>
    <ligand>
        <name>Ca(2+)</name>
        <dbReference type="ChEBI" id="CHEBI:29108"/>
        <label>2</label>
    </ligand>
</feature>
<feature type="splice variant" id="VSP_055509" description="In isoform 2." evidence="6">
    <location>
        <begin position="18"/>
        <end position="66"/>
    </location>
</feature>
<feature type="sequence variant" id="VAR_060268" description="In dbSNP:rs6512087." evidence="3">
    <original>G</original>
    <variation>E</variation>
    <location>
        <position position="139"/>
    </location>
</feature>
<feature type="helix" evidence="10">
    <location>
        <begin position="10"/>
        <end position="19"/>
    </location>
</feature>
<feature type="helix" evidence="10">
    <location>
        <begin position="24"/>
        <end position="37"/>
    </location>
</feature>
<feature type="turn" evidence="10">
    <location>
        <begin position="39"/>
        <end position="41"/>
    </location>
</feature>
<feature type="helix" evidence="11">
    <location>
        <begin position="46"/>
        <end position="48"/>
    </location>
</feature>
<feature type="helix" evidence="10">
    <location>
        <begin position="56"/>
        <end position="60"/>
    </location>
</feature>
<feature type="turn" evidence="10">
    <location>
        <begin position="63"/>
        <end position="67"/>
    </location>
</feature>
<feature type="helix" evidence="10">
    <location>
        <begin position="71"/>
        <end position="78"/>
    </location>
</feature>
<feature type="strand" evidence="10">
    <location>
        <begin position="82"/>
        <end position="84"/>
    </location>
</feature>
<feature type="helix" evidence="10">
    <location>
        <begin position="88"/>
        <end position="98"/>
    </location>
</feature>
<feature type="helix" evidence="10">
    <location>
        <begin position="104"/>
        <end position="115"/>
    </location>
</feature>
<feature type="strand" evidence="11">
    <location>
        <begin position="120"/>
        <end position="123"/>
    </location>
</feature>
<feature type="helix" evidence="10">
    <location>
        <begin position="125"/>
        <end position="135"/>
    </location>
</feature>
<feature type="turn" evidence="10">
    <location>
        <begin position="136"/>
        <end position="138"/>
    </location>
</feature>
<feature type="helix" evidence="10">
    <location>
        <begin position="142"/>
        <end position="156"/>
    </location>
</feature>
<feature type="strand" evidence="10">
    <location>
        <begin position="160"/>
        <end position="164"/>
    </location>
</feature>
<feature type="helix" evidence="10">
    <location>
        <begin position="166"/>
        <end position="174"/>
    </location>
</feature>
<feature type="helix" evidence="10">
    <location>
        <begin position="181"/>
        <end position="183"/>
    </location>
</feature>
<comment type="function">
    <text evidence="1">Acts a an auxiliary subunit of the sensory mechanoelectrical transduction (MET) channel in hair cells (By similarity). Plays a role in regulating hair cell MET channel localization and function (By similarity).</text>
</comment>
<comment type="subunit">
    <text evidence="1 4 5">Monomer and homodimer (PubMed:34089643). Interacts with ITGA2B (via C-terminus cytoplasmic tail region); the interaction is stabilized/increased in a calcium and magnesium-dependent manner (PubMed:22779914). Interacts with TMC1 (By similarity).</text>
</comment>
<comment type="interaction">
    <interactant intactId="EBI-10292696">
        <id>Q96Q77</id>
    </interactant>
    <interactant intactId="EBI-11942961">
        <id>Q8IUR7-6</id>
        <label>ARMC8</label>
    </interactant>
    <organismsDiffer>false</organismsDiffer>
    <experiments>3</experiments>
</comment>
<comment type="interaction">
    <interactant intactId="EBI-10292696">
        <id>Q96Q77</id>
    </interactant>
    <interactant intactId="EBI-10181188">
        <id>Q8N7W2-2</id>
        <label>BEND7</label>
    </interactant>
    <organismsDiffer>false</organismsDiffer>
    <experiments>3</experiments>
</comment>
<comment type="interaction">
    <interactant intactId="EBI-10292696">
        <id>Q96Q77</id>
    </interactant>
    <interactant intactId="EBI-12877892">
        <id>Q8WW18</id>
        <label>C17orf50</label>
    </interactant>
    <organismsDiffer>false</organismsDiffer>
    <experiments>3</experiments>
</comment>
<comment type="interaction">
    <interactant intactId="EBI-10292696">
        <id>Q96Q77</id>
    </interactant>
    <interactant intactId="EBI-10179508">
        <id>Q16206-2</id>
        <label>ENOX2</label>
    </interactant>
    <organismsDiffer>false</organismsDiffer>
    <experiments>3</experiments>
</comment>
<comment type="interaction">
    <interactant intactId="EBI-10292696">
        <id>Q96Q77</id>
    </interactant>
    <interactant intactId="EBI-10172181">
        <id>Q53SE7</id>
        <label>FLJ13057</label>
    </interactant>
    <organismsDiffer>false</organismsDiffer>
    <experiments>3</experiments>
</comment>
<comment type="interaction">
    <interactant intactId="EBI-10292696">
        <id>Q96Q77</id>
    </interactant>
    <interactant intactId="EBI-2548508">
        <id>Q96IK5</id>
        <label>GMCL1</label>
    </interactant>
    <organismsDiffer>false</organismsDiffer>
    <experiments>3</experiments>
</comment>
<comment type="interaction">
    <interactant intactId="EBI-10292696">
        <id>Q96Q77</id>
    </interactant>
    <interactant intactId="EBI-749265">
        <id>Q8N6L0</id>
        <label>KASH5</label>
    </interactant>
    <organismsDiffer>false</organismsDiffer>
    <experiments>3</experiments>
</comment>
<comment type="interaction">
    <interactant intactId="EBI-10292696">
        <id>Q96Q77</id>
    </interactant>
    <interactant intactId="EBI-10292791">
        <id>Q5JT82</id>
        <label>KLF17</label>
    </interactant>
    <organismsDiffer>false</organismsDiffer>
    <experiments>6</experiments>
</comment>
<comment type="interaction">
    <interactant intactId="EBI-10292696">
        <id>Q96Q77</id>
    </interactant>
    <interactant intactId="EBI-739832">
        <id>Q8TBB1</id>
        <label>LNX1</label>
    </interactant>
    <organismsDiffer>false</organismsDiffer>
    <experiments>3</experiments>
</comment>
<comment type="interaction">
    <interactant intactId="EBI-10292696">
        <id>Q96Q77</id>
    </interactant>
    <interactant intactId="EBI-2864512">
        <id>P50221</id>
        <label>MEOX1</label>
    </interactant>
    <organismsDiffer>false</organismsDiffer>
    <experiments>3</experiments>
</comment>
<comment type="interaction">
    <interactant intactId="EBI-10292696">
        <id>Q96Q77</id>
    </interactant>
    <interactant intactId="EBI-748397">
        <id>P50222</id>
        <label>MEOX2</label>
    </interactant>
    <organismsDiffer>false</organismsDiffer>
    <experiments>3</experiments>
</comment>
<comment type="interaction">
    <interactant intactId="EBI-10292696">
        <id>Q96Q77</id>
    </interactant>
    <interactant intactId="EBI-16439278">
        <id>Q6FHY5</id>
        <label>MEOX2</label>
    </interactant>
    <organismsDiffer>false</organismsDiffer>
    <experiments>3</experiments>
</comment>
<comment type="interaction">
    <interactant intactId="EBI-10292696">
        <id>Q96Q77</id>
    </interactant>
    <interactant intactId="EBI-18012223">
        <id>P60323-2</id>
        <label>NANOS3</label>
    </interactant>
    <organismsDiffer>false</organismsDiffer>
    <experiments>3</experiments>
</comment>
<comment type="interaction">
    <interactant intactId="EBI-10292696">
        <id>Q96Q77</id>
    </interactant>
    <interactant intactId="EBI-744871">
        <id>O00746</id>
        <label>NME4</label>
    </interactant>
    <organismsDiffer>false</organismsDiffer>
    <experiments>3</experiments>
</comment>
<comment type="interaction">
    <interactant intactId="EBI-10292696">
        <id>Q96Q77</id>
    </interactant>
    <interactant intactId="EBI-296331">
        <id>Q02548</id>
        <label>PAX5</label>
    </interactant>
    <organismsDiffer>false</organismsDiffer>
    <experiments>3</experiments>
</comment>
<comment type="interaction">
    <interactant intactId="EBI-10292696">
        <id>Q96Q77</id>
    </interactant>
    <interactant intactId="EBI-747278">
        <id>P26367</id>
        <label>PAX6</label>
    </interactant>
    <organismsDiffer>false</organismsDiffer>
    <experiments>3</experiments>
</comment>
<comment type="interaction">
    <interactant intactId="EBI-10292696">
        <id>Q96Q77</id>
    </interactant>
    <interactant intactId="EBI-347928">
        <id>P62487</id>
        <label>POLR2G</label>
    </interactant>
    <organismsDiffer>false</organismsDiffer>
    <experiments>3</experiments>
</comment>
<comment type="interaction">
    <interactant intactId="EBI-10292696">
        <id>Q96Q77</id>
    </interactant>
    <interactant intactId="EBI-12029004">
        <id>P78424</id>
        <label>POU6F2</label>
    </interactant>
    <organismsDiffer>false</organismsDiffer>
    <experiments>3</experiments>
</comment>
<comment type="interaction">
    <interactant intactId="EBI-10292696">
        <id>Q96Q77</id>
    </interactant>
    <interactant intactId="EBI-1210429">
        <id>Q9NYW8</id>
        <label>RBAK</label>
    </interactant>
    <organismsDiffer>false</organismsDiffer>
    <experiments>3</experiments>
</comment>
<comment type="interaction">
    <interactant intactId="EBI-10292696">
        <id>Q96Q77</id>
    </interactant>
    <interactant intactId="EBI-307352">
        <id>Q04864</id>
        <label>REL</label>
    </interactant>
    <organismsDiffer>false</organismsDiffer>
    <experiments>3</experiments>
</comment>
<comment type="interaction">
    <interactant intactId="EBI-10292696">
        <id>Q96Q77</id>
    </interactant>
    <interactant intactId="EBI-748391">
        <id>Q9BWG6</id>
        <label>SCNM1</label>
    </interactant>
    <organismsDiffer>false</organismsDiffer>
    <experiments>6</experiments>
</comment>
<comment type="interaction">
    <interactant intactId="EBI-10292696">
        <id>Q96Q77</id>
    </interactant>
    <interactant intactId="EBI-2826300">
        <id>Q53GC0</id>
        <label>SERTAD1</label>
    </interactant>
    <organismsDiffer>false</organismsDiffer>
    <experiments>3</experiments>
</comment>
<comment type="interaction">
    <interactant intactId="EBI-10292696">
        <id>Q96Q77</id>
    </interactant>
    <interactant intactId="EBI-748601">
        <id>Q9UHV2</id>
        <label>SERTAD1</label>
    </interactant>
    <organismsDiffer>false</organismsDiffer>
    <experiments>3</experiments>
</comment>
<comment type="interaction">
    <interactant intactId="EBI-10292696">
        <id>Q96Q77</id>
    </interactant>
    <interactant intactId="EBI-355293">
        <id>P03973</id>
        <label>SLPI</label>
    </interactant>
    <organismsDiffer>false</organismsDiffer>
    <experiments>3</experiments>
</comment>
<comment type="interaction">
    <interactant intactId="EBI-10292696">
        <id>Q96Q77</id>
    </interactant>
    <interactant intactId="EBI-348158">
        <id>Q02447</id>
        <label>SP3</label>
    </interactant>
    <organismsDiffer>false</organismsDiffer>
    <experiments>3</experiments>
</comment>
<comment type="interaction">
    <interactant intactId="EBI-10292696">
        <id>Q96Q77</id>
    </interactant>
    <interactant intactId="EBI-10198587">
        <id>Q02446</id>
        <label>SP4</label>
    </interactant>
    <organismsDiffer>false</organismsDiffer>
    <experiments>6</experiments>
</comment>
<comment type="interaction">
    <interactant intactId="EBI-10292696">
        <id>Q96Q77</id>
    </interactant>
    <interactant intactId="EBI-2800683">
        <id>Q16563</id>
        <label>SYPL1</label>
    </interactant>
    <organismsDiffer>false</organismsDiffer>
    <experiments>3</experiments>
</comment>
<comment type="interaction">
    <interactant intactId="EBI-10292696">
        <id>Q96Q77</id>
    </interactant>
    <interactant intactId="EBI-2554984">
        <id>Q9Y6A5</id>
        <label>TACC3</label>
    </interactant>
    <organismsDiffer>false</organismsDiffer>
    <experiments>9</experiments>
</comment>
<comment type="interaction">
    <interactant intactId="EBI-10292696">
        <id>Q96Q77</id>
    </interactant>
    <interactant intactId="EBI-717810">
        <id>Q08117</id>
        <label>TLE5</label>
    </interactant>
    <organismsDiffer>false</organismsDiffer>
    <experiments>3</experiments>
</comment>
<comment type="interaction">
    <interactant intactId="EBI-10292696">
        <id>Q96Q77</id>
    </interactant>
    <interactant intactId="EBI-11741437">
        <id>Q08117-2</id>
        <label>TLE5</label>
    </interactant>
    <organismsDiffer>false</organismsDiffer>
    <experiments>3</experiments>
</comment>
<comment type="interaction">
    <interactant intactId="EBI-10292696">
        <id>Q96Q77</id>
    </interactant>
    <interactant intactId="EBI-523498">
        <id>O00463</id>
        <label>TRAF5</label>
    </interactant>
    <organismsDiffer>false</organismsDiffer>
    <experiments>3</experiments>
</comment>
<comment type="interaction">
    <interactant intactId="EBI-10292696">
        <id>Q96Q77</id>
    </interactant>
    <interactant intactId="EBI-2820256">
        <id>Q14142</id>
        <label>TRIM14</label>
    </interactant>
    <organismsDiffer>false</organismsDiffer>
    <experiments>3</experiments>
</comment>
<comment type="interaction">
    <interactant intactId="EBI-10292696">
        <id>Q96Q77</id>
    </interactant>
    <interactant intactId="EBI-749840">
        <id>Q9C040</id>
        <label>TRIM2</label>
    </interactant>
    <organismsDiffer>false</organismsDiffer>
    <experiments>6</experiments>
</comment>
<comment type="interaction">
    <interactant intactId="EBI-10292696">
        <id>Q96Q77</id>
    </interactant>
    <interactant intactId="EBI-740718">
        <id>O43298</id>
        <label>ZBTB43</label>
    </interactant>
    <organismsDiffer>false</organismsDiffer>
    <experiments>3</experiments>
</comment>
<comment type="interaction">
    <interactant intactId="EBI-10292696">
        <id>Q96Q77</id>
    </interactant>
    <interactant intactId="EBI-14104088">
        <id>Q53FD0-2</id>
        <label>ZC2HC1C</label>
    </interactant>
    <organismsDiffer>false</organismsDiffer>
    <experiments>3</experiments>
</comment>
<comment type="interaction">
    <interactant intactId="EBI-10292696">
        <id>Q96Q77</id>
    </interactant>
    <interactant intactId="EBI-2555749">
        <id>Q6P2D0</id>
        <label>ZFP1</label>
    </interactant>
    <organismsDiffer>false</organismsDiffer>
    <experiments>3</experiments>
</comment>
<comment type="interaction">
    <interactant intactId="EBI-10292696">
        <id>Q96Q77</id>
    </interactant>
    <interactant intactId="EBI-12879708">
        <id>Q9NU63-3</id>
        <label>ZFP57</label>
    </interactant>
    <organismsDiffer>false</organismsDiffer>
    <experiments>3</experiments>
</comment>
<comment type="interaction">
    <interactant intactId="EBI-10292696">
        <id>Q96Q77</id>
    </interactant>
    <interactant intactId="EBI-11914212">
        <id>Q15072</id>
        <label>ZNF146</label>
    </interactant>
    <organismsDiffer>false</organismsDiffer>
    <experiments>3</experiments>
</comment>
<comment type="interaction">
    <interactant intactId="EBI-10292696">
        <id>Q96Q77</id>
    </interactant>
    <interactant intactId="EBI-12272076">
        <id>Q13360-2</id>
        <label>ZNF177</label>
    </interactant>
    <organismsDiffer>false</organismsDiffer>
    <experiments>3</experiments>
</comment>
<comment type="interaction">
    <interactant intactId="EBI-10292696">
        <id>Q96Q77</id>
    </interactant>
    <interactant intactId="EBI-12055755">
        <id>Q9UJW8-4</id>
        <label>ZNF180</label>
    </interactant>
    <organismsDiffer>false</organismsDiffer>
    <experiments>3</experiments>
</comment>
<comment type="interaction">
    <interactant intactId="EBI-10292696">
        <id>Q96Q77</id>
    </interactant>
    <interactant intactId="EBI-12884200">
        <id>P17023</id>
        <label>ZNF19</label>
    </interactant>
    <organismsDiffer>false</organismsDiffer>
    <experiments>3</experiments>
</comment>
<comment type="interaction">
    <interactant intactId="EBI-10292696">
        <id>Q96Q77</id>
    </interactant>
    <interactant intactId="EBI-750821">
        <id>Q8N554</id>
        <label>ZNF276</label>
    </interactant>
    <organismsDiffer>false</organismsDiffer>
    <experiments>3</experiments>
</comment>
<comment type="interaction">
    <interactant intactId="EBI-10292696">
        <id>Q96Q77</id>
    </interactant>
    <interactant intactId="EBI-1210473">
        <id>Q96PQ6</id>
        <label>ZNF317</label>
    </interactant>
    <organismsDiffer>false</organismsDiffer>
    <experiments>5</experiments>
</comment>
<comment type="interaction">
    <interactant intactId="EBI-10292696">
        <id>Q96Q77</id>
    </interactant>
    <interactant intactId="EBI-7233259">
        <id>Q86UD4</id>
        <label>ZNF329</label>
    </interactant>
    <organismsDiffer>false</organismsDiffer>
    <experiments>3</experiments>
</comment>
<comment type="interaction">
    <interactant intactId="EBI-10292696">
        <id>Q96Q77</id>
    </interactant>
    <interactant intactId="EBI-8643207">
        <id>Q8TD17</id>
        <label>ZNF398</label>
    </interactant>
    <organismsDiffer>false</organismsDiffer>
    <experiments>6</experiments>
</comment>
<comment type="interaction">
    <interactant intactId="EBI-10292696">
        <id>Q96Q77</id>
    </interactant>
    <interactant intactId="EBI-743265">
        <id>Q9BUY5</id>
        <label>ZNF426</label>
    </interactant>
    <organismsDiffer>false</organismsDiffer>
    <experiments>3</experiments>
</comment>
<comment type="interaction">
    <interactant intactId="EBI-10292696">
        <id>Q96Q77</id>
    </interactant>
    <interactant intactId="EBI-2555731">
        <id>Q9H707</id>
        <label>ZNF552</label>
    </interactant>
    <organismsDiffer>false</organismsDiffer>
    <experiments>3</experiments>
</comment>
<comment type="interaction">
    <interactant intactId="EBI-10292696">
        <id>Q96Q77</id>
    </interactant>
    <interactant intactId="EBI-11955189">
        <id>Q96N58</id>
        <label>ZNF578</label>
    </interactant>
    <organismsDiffer>false</organismsDiffer>
    <experiments>3</experiments>
</comment>
<comment type="interaction">
    <interactant intactId="EBI-10292696">
        <id>Q96Q77</id>
    </interactant>
    <interactant intactId="EBI-9091553">
        <id>Q96LX8</id>
        <label>ZNF597</label>
    </interactant>
    <organismsDiffer>false</organismsDiffer>
    <experiments>3</experiments>
</comment>
<comment type="interaction">
    <interactant intactId="EBI-10292696">
        <id>Q96Q77</id>
    </interactant>
    <interactant intactId="EBI-4395669">
        <id>Q6ZNG0</id>
        <label>ZNF620</label>
    </interactant>
    <organismsDiffer>false</organismsDiffer>
    <experiments>3</experiments>
</comment>
<comment type="interaction">
    <interactant intactId="EBI-10292696">
        <id>Q96Q77</id>
    </interactant>
    <interactant intactId="EBI-2799450">
        <id>Q8N3J9</id>
        <label>ZNF664</label>
    </interactant>
    <organismsDiffer>false</organismsDiffer>
    <experiments>3</experiments>
</comment>
<comment type="interaction">
    <interactant intactId="EBI-10292696">
        <id>Q96Q77</id>
    </interactant>
    <interactant intactId="EBI-4395732">
        <id>P0C7X2</id>
        <label>ZNF688</label>
    </interactant>
    <organismsDiffer>false</organismsDiffer>
    <experiments>3</experiments>
</comment>
<comment type="interaction">
    <interactant intactId="EBI-10292696">
        <id>Q96Q77</id>
    </interactant>
    <interactant intactId="EBI-10251462">
        <id>Q6NX45</id>
        <label>ZNF774</label>
    </interactant>
    <organismsDiffer>false</organismsDiffer>
    <experiments>3</experiments>
</comment>
<comment type="interaction">
    <interactant intactId="EBI-10292696">
        <id>Q96Q77</id>
    </interactant>
    <interactant intactId="EBI-5667516">
        <id>Q9Y2P0</id>
        <label>ZNF835</label>
    </interactant>
    <organismsDiffer>false</organismsDiffer>
    <experiments>3</experiments>
</comment>
<comment type="interaction">
    <interactant intactId="EBI-10292696">
        <id>Q96Q77</id>
    </interactant>
    <interactant intactId="EBI-7252920">
        <id>Q8NAM6</id>
        <label>ZSCAN4</label>
    </interactant>
    <organismsDiffer>false</organismsDiffer>
    <experiments>3</experiments>
</comment>
<comment type="interaction">
    <interactant intactId="EBI-10292696">
        <id>Q96Q77</id>
    </interactant>
    <interactant intactId="EBI-8836980">
        <id>Q9BUG6</id>
        <label>ZSCAN5A</label>
    </interactant>
    <organismsDiffer>false</organismsDiffer>
    <experiments>3</experiments>
</comment>
<comment type="alternative products">
    <event type="alternative splicing"/>
    <isoform>
        <id>Q96Q77-1</id>
        <name>1</name>
        <sequence type="displayed"/>
    </isoform>
    <isoform>
        <id>Q96Q77-2</id>
        <name>2</name>
        <sequence type="described" ref="VSP_055509"/>
    </isoform>
</comment>
<comment type="miscellaneous">
    <text>The binding of either calcium or magnesium significantly increases the structural stability of the protein in comparison to apo-CIB (calcium- and magnesium-free form).</text>
</comment>
<sequence length="187" mass="21802">MGNKQTVFTHEQLEAYQDCTFFTRKEIMRLFYRYQDLAPQLVPLDYTTCPDVKVPYELIGSMPELKDNPFRQRIAQVFSEDGDGHMTLDNFLDMFSVMSEMAPRDLKAYYAFKIYDFNNDDYICAWDLEQTVTKLTRGGLSAEEVSLVCEKVLDEADGDHDGRLSLEDFQNMILRAPDFLSTFHIRI</sequence>
<keyword id="KW-0002">3D-structure</keyword>
<keyword id="KW-0025">Alternative splicing</keyword>
<keyword id="KW-0106">Calcium</keyword>
<keyword id="KW-0460">Magnesium</keyword>
<keyword id="KW-0479">Metal-binding</keyword>
<keyword id="KW-1267">Proteomics identification</keyword>
<keyword id="KW-1185">Reference proteome</keyword>
<keyword id="KW-0677">Repeat</keyword>
<gene>
    <name type="primary">CIB3</name>
    <name type="synonym">KIP3</name>
</gene>
<name>CIB3_HUMAN</name>
<reference key="1">
    <citation type="submission" date="2000-11" db="EMBL/GenBank/DDBJ databases">
        <authorList>
            <person name="Hayashi A."/>
            <person name="Okaze H."/>
            <person name="Kozuma S."/>
            <person name="Saito T."/>
        </authorList>
    </citation>
    <scope>NUCLEOTIDE SEQUENCE [MRNA] (ISOFORM 1)</scope>
</reference>
<reference key="2">
    <citation type="journal article" date="2004" name="Nature">
        <title>The DNA sequence and biology of human chromosome 19.</title>
        <authorList>
            <person name="Grimwood J."/>
            <person name="Gordon L.A."/>
            <person name="Olsen A.S."/>
            <person name="Terry A."/>
            <person name="Schmutz J."/>
            <person name="Lamerdin J.E."/>
            <person name="Hellsten U."/>
            <person name="Goodstein D."/>
            <person name="Couronne O."/>
            <person name="Tran-Gyamfi M."/>
            <person name="Aerts A."/>
            <person name="Altherr M."/>
            <person name="Ashworth L."/>
            <person name="Bajorek E."/>
            <person name="Black S."/>
            <person name="Branscomb E."/>
            <person name="Caenepeel S."/>
            <person name="Carrano A.V."/>
            <person name="Caoile C."/>
            <person name="Chan Y.M."/>
            <person name="Christensen M."/>
            <person name="Cleland C.A."/>
            <person name="Copeland A."/>
            <person name="Dalin E."/>
            <person name="Dehal P."/>
            <person name="Denys M."/>
            <person name="Detter J.C."/>
            <person name="Escobar J."/>
            <person name="Flowers D."/>
            <person name="Fotopulos D."/>
            <person name="Garcia C."/>
            <person name="Georgescu A.M."/>
            <person name="Glavina T."/>
            <person name="Gomez M."/>
            <person name="Gonzales E."/>
            <person name="Groza M."/>
            <person name="Hammon N."/>
            <person name="Hawkins T."/>
            <person name="Haydu L."/>
            <person name="Ho I."/>
            <person name="Huang W."/>
            <person name="Israni S."/>
            <person name="Jett J."/>
            <person name="Kadner K."/>
            <person name="Kimball H."/>
            <person name="Kobayashi A."/>
            <person name="Larionov V."/>
            <person name="Leem S.-H."/>
            <person name="Lopez F."/>
            <person name="Lou Y."/>
            <person name="Lowry S."/>
            <person name="Malfatti S."/>
            <person name="Martinez D."/>
            <person name="McCready P.M."/>
            <person name="Medina C."/>
            <person name="Morgan J."/>
            <person name="Nelson K."/>
            <person name="Nolan M."/>
            <person name="Ovcharenko I."/>
            <person name="Pitluck S."/>
            <person name="Pollard M."/>
            <person name="Popkie A.P."/>
            <person name="Predki P."/>
            <person name="Quan G."/>
            <person name="Ramirez L."/>
            <person name="Rash S."/>
            <person name="Retterer J."/>
            <person name="Rodriguez A."/>
            <person name="Rogers S."/>
            <person name="Salamov A."/>
            <person name="Salazar A."/>
            <person name="She X."/>
            <person name="Smith D."/>
            <person name="Slezak T."/>
            <person name="Solovyev V."/>
            <person name="Thayer N."/>
            <person name="Tice H."/>
            <person name="Tsai M."/>
            <person name="Ustaszewska A."/>
            <person name="Vo N."/>
            <person name="Wagner M."/>
            <person name="Wheeler J."/>
            <person name="Wu K."/>
            <person name="Xie G."/>
            <person name="Yang J."/>
            <person name="Dubchak I."/>
            <person name="Furey T.S."/>
            <person name="DeJong P."/>
            <person name="Dickson M."/>
            <person name="Gordon D."/>
            <person name="Eichler E.E."/>
            <person name="Pennacchio L.A."/>
            <person name="Richardson P."/>
            <person name="Stubbs L."/>
            <person name="Rokhsar D.S."/>
            <person name="Myers R.M."/>
            <person name="Rubin E.M."/>
            <person name="Lucas S.M."/>
        </authorList>
    </citation>
    <scope>NUCLEOTIDE SEQUENCE [LARGE SCALE GENOMIC DNA]</scope>
</reference>
<reference key="3">
    <citation type="submission" date="2005-07" db="EMBL/GenBank/DDBJ databases">
        <authorList>
            <person name="Mural R.J."/>
            <person name="Istrail S."/>
            <person name="Sutton G."/>
            <person name="Florea L."/>
            <person name="Halpern A.L."/>
            <person name="Mobarry C.M."/>
            <person name="Lippert R."/>
            <person name="Walenz B."/>
            <person name="Shatkay H."/>
            <person name="Dew I."/>
            <person name="Miller J.R."/>
            <person name="Flanigan M.J."/>
            <person name="Edwards N.J."/>
            <person name="Bolanos R."/>
            <person name="Fasulo D."/>
            <person name="Halldorsson B.V."/>
            <person name="Hannenhalli S."/>
            <person name="Turner R."/>
            <person name="Yooseph S."/>
            <person name="Lu F."/>
            <person name="Nusskern D.R."/>
            <person name="Shue B.C."/>
            <person name="Zheng X.H."/>
            <person name="Zhong F."/>
            <person name="Delcher A.L."/>
            <person name="Huson D.H."/>
            <person name="Kravitz S.A."/>
            <person name="Mouchard L."/>
            <person name="Reinert K."/>
            <person name="Remington K.A."/>
            <person name="Clark A.G."/>
            <person name="Waterman M.S."/>
            <person name="Eichler E.E."/>
            <person name="Adams M.D."/>
            <person name="Hunkapiller M.W."/>
            <person name="Myers E.W."/>
            <person name="Venter J.C."/>
        </authorList>
    </citation>
    <scope>NUCLEOTIDE SEQUENCE [LARGE SCALE GENOMIC DNA]</scope>
</reference>
<reference key="4">
    <citation type="journal article" date="2004" name="Genome Res.">
        <title>The status, quality, and expansion of the NIH full-length cDNA project: the Mammalian Gene Collection (MGC).</title>
        <authorList>
            <consortium name="The MGC Project Team"/>
        </authorList>
    </citation>
    <scope>NUCLEOTIDE SEQUENCE [LARGE SCALE MRNA] (ISOFORMS 1 AND 2)</scope>
    <scope>VARIANT GLU-139</scope>
</reference>
<reference key="5">
    <citation type="journal article" date="2012" name="Biochem. Cell Biol.">
        <title>Biophysical and structural studies of the human calcium- and integrin-binding protein family: understanding their functional similarities and differences.</title>
        <authorList>
            <person name="Huang H."/>
            <person name="Bogstie J.N."/>
            <person name="Vogel H.J."/>
        </authorList>
    </citation>
    <scope>INTERACTION WITH ITGA2B</scope>
    <scope>MAGNESIUM-BINDING</scope>
    <scope>CALCIUM-BINDING</scope>
</reference>
<reference evidence="7 8 9" key="6">
    <citation type="journal article" date="2021" name="Neuron">
        <title>CIB2 and CIB3 are auxiliary subunits of the mechanotransduction channel of hair cells.</title>
        <authorList>
            <person name="Liang X."/>
            <person name="Qiu X."/>
            <person name="Dionne G."/>
            <person name="Cunningham C.L."/>
            <person name="Pucak M.L."/>
            <person name="Peng G."/>
            <person name="Kim Y.H."/>
            <person name="Lauer A."/>
            <person name="Shapiro L."/>
            <person name="Mueller U."/>
        </authorList>
    </citation>
    <scope>X-RAY CRYSTALLOGRAPHY (1.84 ANGSTROMS) IN COMPLEX WITH MOUSE TIMC1</scope>
    <scope>SUBUNIT</scope>
</reference>
<evidence type="ECO:0000250" key="1">
    <source>
        <dbReference type="UniProtKB" id="Q0P523"/>
    </source>
</evidence>
<evidence type="ECO:0000255" key="2">
    <source>
        <dbReference type="PROSITE-ProRule" id="PRU00448"/>
    </source>
</evidence>
<evidence type="ECO:0000269" key="3">
    <source>
    </source>
</evidence>
<evidence type="ECO:0000269" key="4">
    <source>
    </source>
</evidence>
<evidence type="ECO:0000269" key="5">
    <source>
    </source>
</evidence>
<evidence type="ECO:0000303" key="6">
    <source>
    </source>
</evidence>
<evidence type="ECO:0007744" key="7">
    <source>
        <dbReference type="PDB" id="6WU5"/>
    </source>
</evidence>
<evidence type="ECO:0007744" key="8">
    <source>
        <dbReference type="PDB" id="6WU7"/>
    </source>
</evidence>
<evidence type="ECO:0007744" key="9">
    <source>
        <dbReference type="PDB" id="6WUD"/>
    </source>
</evidence>
<evidence type="ECO:0007829" key="10">
    <source>
        <dbReference type="PDB" id="6WU7"/>
    </source>
</evidence>
<evidence type="ECO:0007829" key="11">
    <source>
        <dbReference type="PDB" id="6WUD"/>
    </source>
</evidence>
<organism>
    <name type="scientific">Homo sapiens</name>
    <name type="common">Human</name>
    <dbReference type="NCBI Taxonomy" id="9606"/>
    <lineage>
        <taxon>Eukaryota</taxon>
        <taxon>Metazoa</taxon>
        <taxon>Chordata</taxon>
        <taxon>Craniata</taxon>
        <taxon>Vertebrata</taxon>
        <taxon>Euteleostomi</taxon>
        <taxon>Mammalia</taxon>
        <taxon>Eutheria</taxon>
        <taxon>Euarchontoglires</taxon>
        <taxon>Primates</taxon>
        <taxon>Haplorrhini</taxon>
        <taxon>Catarrhini</taxon>
        <taxon>Hominidae</taxon>
        <taxon>Homo</taxon>
    </lineage>
</organism>